<evidence type="ECO:0000255" key="1">
    <source>
        <dbReference type="HAMAP-Rule" id="MF_00381"/>
    </source>
</evidence>
<comment type="function">
    <text evidence="1">This protein is one of the two subunits of integration host factor, a specific DNA-binding protein that functions in genetic recombination as well as in transcriptional and translational control.</text>
</comment>
<comment type="subunit">
    <text evidence="1">Heterodimer of an alpha and a beta chain.</text>
</comment>
<comment type="similarity">
    <text evidence="1">Belongs to the bacterial histone-like protein family.</text>
</comment>
<organism>
    <name type="scientific">Serratia proteamaculans (strain 568)</name>
    <dbReference type="NCBI Taxonomy" id="399741"/>
    <lineage>
        <taxon>Bacteria</taxon>
        <taxon>Pseudomonadati</taxon>
        <taxon>Pseudomonadota</taxon>
        <taxon>Gammaproteobacteria</taxon>
        <taxon>Enterobacterales</taxon>
        <taxon>Yersiniaceae</taxon>
        <taxon>Serratia</taxon>
    </lineage>
</organism>
<dbReference type="EMBL" id="CP000826">
    <property type="protein sequence ID" value="ABV40814.1"/>
    <property type="molecule type" value="Genomic_DNA"/>
</dbReference>
<dbReference type="SMR" id="A8GCH4"/>
<dbReference type="STRING" id="399741.Spro_1710"/>
<dbReference type="KEGG" id="spe:Spro_1710"/>
<dbReference type="eggNOG" id="COG0776">
    <property type="taxonomic scope" value="Bacteria"/>
</dbReference>
<dbReference type="HOGENOM" id="CLU_105066_2_0_6"/>
<dbReference type="OrthoDB" id="9804203at2"/>
<dbReference type="GO" id="GO:0005694">
    <property type="term" value="C:chromosome"/>
    <property type="evidence" value="ECO:0007669"/>
    <property type="project" value="InterPro"/>
</dbReference>
<dbReference type="GO" id="GO:0005829">
    <property type="term" value="C:cytosol"/>
    <property type="evidence" value="ECO:0007669"/>
    <property type="project" value="TreeGrafter"/>
</dbReference>
<dbReference type="GO" id="GO:0003677">
    <property type="term" value="F:DNA binding"/>
    <property type="evidence" value="ECO:0007669"/>
    <property type="project" value="UniProtKB-UniRule"/>
</dbReference>
<dbReference type="GO" id="GO:0030527">
    <property type="term" value="F:structural constituent of chromatin"/>
    <property type="evidence" value="ECO:0007669"/>
    <property type="project" value="InterPro"/>
</dbReference>
<dbReference type="GO" id="GO:0006310">
    <property type="term" value="P:DNA recombination"/>
    <property type="evidence" value="ECO:0007669"/>
    <property type="project" value="UniProtKB-UniRule"/>
</dbReference>
<dbReference type="GO" id="GO:0006355">
    <property type="term" value="P:regulation of DNA-templated transcription"/>
    <property type="evidence" value="ECO:0007669"/>
    <property type="project" value="UniProtKB-UniRule"/>
</dbReference>
<dbReference type="GO" id="GO:0006417">
    <property type="term" value="P:regulation of translation"/>
    <property type="evidence" value="ECO:0007669"/>
    <property type="project" value="UniProtKB-UniRule"/>
</dbReference>
<dbReference type="CDD" id="cd13836">
    <property type="entry name" value="IHF_B"/>
    <property type="match status" value="1"/>
</dbReference>
<dbReference type="FunFam" id="4.10.520.10:FF:000003">
    <property type="entry name" value="Integration host factor subunit beta"/>
    <property type="match status" value="1"/>
</dbReference>
<dbReference type="Gene3D" id="4.10.520.10">
    <property type="entry name" value="IHF-like DNA-binding proteins"/>
    <property type="match status" value="1"/>
</dbReference>
<dbReference type="HAMAP" id="MF_00381">
    <property type="entry name" value="IHF_beta"/>
    <property type="match status" value="1"/>
</dbReference>
<dbReference type="InterPro" id="IPR000119">
    <property type="entry name" value="Hist_DNA-bd"/>
</dbReference>
<dbReference type="InterPro" id="IPR020816">
    <property type="entry name" value="Histone-like_DNA-bd_CS"/>
</dbReference>
<dbReference type="InterPro" id="IPR010992">
    <property type="entry name" value="IHF-like_DNA-bd_dom_sf"/>
</dbReference>
<dbReference type="InterPro" id="IPR005685">
    <property type="entry name" value="IHF_beta"/>
</dbReference>
<dbReference type="NCBIfam" id="TIGR00988">
    <property type="entry name" value="hip"/>
    <property type="match status" value="1"/>
</dbReference>
<dbReference type="NCBIfam" id="NF001222">
    <property type="entry name" value="PRK00199.1"/>
    <property type="match status" value="1"/>
</dbReference>
<dbReference type="PANTHER" id="PTHR33175">
    <property type="entry name" value="DNA-BINDING PROTEIN HU"/>
    <property type="match status" value="1"/>
</dbReference>
<dbReference type="PANTHER" id="PTHR33175:SF5">
    <property type="entry name" value="INTEGRATION HOST FACTOR SUBUNIT BETA"/>
    <property type="match status" value="1"/>
</dbReference>
<dbReference type="Pfam" id="PF00216">
    <property type="entry name" value="Bac_DNA_binding"/>
    <property type="match status" value="1"/>
</dbReference>
<dbReference type="PRINTS" id="PR01727">
    <property type="entry name" value="DNABINDINGHU"/>
</dbReference>
<dbReference type="SMART" id="SM00411">
    <property type="entry name" value="BHL"/>
    <property type="match status" value="1"/>
</dbReference>
<dbReference type="SUPFAM" id="SSF47729">
    <property type="entry name" value="IHF-like DNA-binding proteins"/>
    <property type="match status" value="1"/>
</dbReference>
<dbReference type="PROSITE" id="PS00045">
    <property type="entry name" value="HISTONE_LIKE"/>
    <property type="match status" value="1"/>
</dbReference>
<sequence length="94" mass="10518">MTKSELIERLAGQQSHVPAKAVEDAVKEMLEHMAATLADGERIEIRGFGSFSLHYRAPRVGRNPKTGDKVELDGKYVPHFKPGKELRDRANIYG</sequence>
<name>IHFB_SERP5</name>
<keyword id="KW-0233">DNA recombination</keyword>
<keyword id="KW-0238">DNA-binding</keyword>
<keyword id="KW-0804">Transcription</keyword>
<keyword id="KW-0805">Transcription regulation</keyword>
<keyword id="KW-0810">Translation regulation</keyword>
<gene>
    <name evidence="1" type="primary">ihfB</name>
    <name evidence="1" type="synonym">himD</name>
    <name type="ordered locus">Spro_1710</name>
</gene>
<protein>
    <recommendedName>
        <fullName evidence="1">Integration host factor subunit beta</fullName>
        <shortName evidence="1">IHF-beta</shortName>
    </recommendedName>
</protein>
<accession>A8GCH4</accession>
<feature type="chain" id="PRO_1000060652" description="Integration host factor subunit beta">
    <location>
        <begin position="1"/>
        <end position="94"/>
    </location>
</feature>
<proteinExistence type="inferred from homology"/>
<reference key="1">
    <citation type="submission" date="2007-09" db="EMBL/GenBank/DDBJ databases">
        <title>Complete sequence of chromosome of Serratia proteamaculans 568.</title>
        <authorList>
            <consortium name="US DOE Joint Genome Institute"/>
            <person name="Copeland A."/>
            <person name="Lucas S."/>
            <person name="Lapidus A."/>
            <person name="Barry K."/>
            <person name="Glavina del Rio T."/>
            <person name="Dalin E."/>
            <person name="Tice H."/>
            <person name="Pitluck S."/>
            <person name="Chain P."/>
            <person name="Malfatti S."/>
            <person name="Shin M."/>
            <person name="Vergez L."/>
            <person name="Schmutz J."/>
            <person name="Larimer F."/>
            <person name="Land M."/>
            <person name="Hauser L."/>
            <person name="Kyrpides N."/>
            <person name="Kim E."/>
            <person name="Taghavi S."/>
            <person name="Newman L."/>
            <person name="Vangronsveld J."/>
            <person name="van der Lelie D."/>
            <person name="Richardson P."/>
        </authorList>
    </citation>
    <scope>NUCLEOTIDE SEQUENCE [LARGE SCALE GENOMIC DNA]</scope>
    <source>
        <strain>568</strain>
    </source>
</reference>